<dbReference type="EMBL" id="AK082539">
    <property type="protein sequence ID" value="BAC38523.1"/>
    <property type="molecule type" value="mRNA"/>
</dbReference>
<dbReference type="EMBL" id="BC056340">
    <property type="protein sequence ID" value="AAH56340.2"/>
    <property type="molecule type" value="mRNA"/>
</dbReference>
<dbReference type="EMBL" id="BC062117">
    <property type="protein sequence ID" value="AAH62117.1"/>
    <property type="molecule type" value="mRNA"/>
</dbReference>
<dbReference type="EMBL" id="BC098464">
    <property type="protein sequence ID" value="AAH98464.1"/>
    <property type="molecule type" value="mRNA"/>
</dbReference>
<dbReference type="EMBL" id="BC110429">
    <property type="protein sequence ID" value="AAI10430.1"/>
    <property type="molecule type" value="mRNA"/>
</dbReference>
<dbReference type="CCDS" id="CCDS20391.1"/>
<dbReference type="RefSeq" id="NP_891984.1">
    <property type="nucleotide sequence ID" value="NM_182939.4"/>
</dbReference>
<dbReference type="BioGRID" id="231238">
    <property type="interactions" value="10"/>
</dbReference>
<dbReference type="ComplexPortal" id="CPX-158">
    <property type="entry name" value="PPP4C-PPP4R2-PPP4R3A protein phosphatase 4 complex"/>
</dbReference>
<dbReference type="ComplexPortal" id="CPX-163">
    <property type="entry name" value="PPP4C-PPP4R2 protein phosphatase 4 complex"/>
</dbReference>
<dbReference type="ComplexPortal" id="CPX-164">
    <property type="entry name" value="PPP4C-PPP4R2-PPP4R3B protein phosphatase 4 complex"/>
</dbReference>
<dbReference type="FunCoup" id="Q0VGB7">
    <property type="interactions" value="2975"/>
</dbReference>
<dbReference type="IntAct" id="Q0VGB7">
    <property type="interactions" value="1"/>
</dbReference>
<dbReference type="MINT" id="Q0VGB7"/>
<dbReference type="STRING" id="10090.ENSMUSP00000066314"/>
<dbReference type="GlyGen" id="Q0VGB7">
    <property type="glycosylation" value="3 sites, 1 N-linked glycan (2 sites), 1 O-linked glycan (1 site)"/>
</dbReference>
<dbReference type="iPTMnet" id="Q0VGB7"/>
<dbReference type="PhosphoSitePlus" id="Q0VGB7"/>
<dbReference type="jPOST" id="Q0VGB7"/>
<dbReference type="PaxDb" id="10090-ENSMUSP00000066314"/>
<dbReference type="PeptideAtlas" id="Q0VGB7"/>
<dbReference type="ProteomicsDB" id="289722"/>
<dbReference type="Pumba" id="Q0VGB7"/>
<dbReference type="DNASU" id="232314"/>
<dbReference type="GeneID" id="232314"/>
<dbReference type="KEGG" id="mmu:232314"/>
<dbReference type="UCSC" id="uc009dcb.1">
    <property type="organism name" value="mouse"/>
</dbReference>
<dbReference type="AGR" id="MGI:3027896"/>
<dbReference type="CTD" id="151987"/>
<dbReference type="MGI" id="MGI:3027896">
    <property type="gene designation" value="Ppp4r2"/>
</dbReference>
<dbReference type="eggNOG" id="KOG3175">
    <property type="taxonomic scope" value="Eukaryota"/>
</dbReference>
<dbReference type="InParanoid" id="Q0VGB7"/>
<dbReference type="OrthoDB" id="341898at2759"/>
<dbReference type="PhylomeDB" id="Q0VGB7"/>
<dbReference type="TreeFam" id="TF105561"/>
<dbReference type="Reactome" id="R-MMU-5693607">
    <property type="pathway name" value="Processing of DNA double-strand break ends"/>
</dbReference>
<dbReference type="BioGRID-ORCS" id="232314">
    <property type="hits" value="23 hits in 117 CRISPR screens"/>
</dbReference>
<dbReference type="ChiTaRS" id="Ppp4r2">
    <property type="organism name" value="mouse"/>
</dbReference>
<dbReference type="PRO" id="PR:Q0VGB7"/>
<dbReference type="Proteomes" id="UP000000589">
    <property type="component" value="Unplaced"/>
</dbReference>
<dbReference type="RNAct" id="Q0VGB7">
    <property type="molecule type" value="protein"/>
</dbReference>
<dbReference type="GO" id="GO:0005813">
    <property type="term" value="C:centrosome"/>
    <property type="evidence" value="ECO:0007669"/>
    <property type="project" value="UniProtKB-SubCell"/>
</dbReference>
<dbReference type="GO" id="GO:0000785">
    <property type="term" value="C:chromatin"/>
    <property type="evidence" value="ECO:0000266"/>
    <property type="project" value="ComplexPortal"/>
</dbReference>
<dbReference type="GO" id="GO:0005737">
    <property type="term" value="C:cytoplasm"/>
    <property type="evidence" value="ECO:0000314"/>
    <property type="project" value="MGI"/>
</dbReference>
<dbReference type="GO" id="GO:0005634">
    <property type="term" value="C:nucleus"/>
    <property type="evidence" value="ECO:0000314"/>
    <property type="project" value="MGI"/>
</dbReference>
<dbReference type="GO" id="GO:0030289">
    <property type="term" value="C:protein phosphatase 4 complex"/>
    <property type="evidence" value="ECO:0000314"/>
    <property type="project" value="MGI"/>
</dbReference>
<dbReference type="GO" id="GO:0019888">
    <property type="term" value="F:protein phosphatase regulator activity"/>
    <property type="evidence" value="ECO:0000250"/>
    <property type="project" value="UniProtKB"/>
</dbReference>
<dbReference type="GO" id="GO:0002244">
    <property type="term" value="P:hematopoietic progenitor cell differentiation"/>
    <property type="evidence" value="ECO:0000315"/>
    <property type="project" value="MGI"/>
</dbReference>
<dbReference type="GO" id="GO:0006397">
    <property type="term" value="P:mRNA processing"/>
    <property type="evidence" value="ECO:0007669"/>
    <property type="project" value="UniProtKB-KW"/>
</dbReference>
<dbReference type="GO" id="GO:2000779">
    <property type="term" value="P:regulation of double-strand break repair"/>
    <property type="evidence" value="ECO:0000266"/>
    <property type="project" value="ComplexPortal"/>
</dbReference>
<dbReference type="GO" id="GO:0010569">
    <property type="term" value="P:regulation of double-strand break repair via homologous recombination"/>
    <property type="evidence" value="ECO:0000250"/>
    <property type="project" value="UniProtKB"/>
</dbReference>
<dbReference type="GO" id="GO:0008380">
    <property type="term" value="P:RNA splicing"/>
    <property type="evidence" value="ECO:0007669"/>
    <property type="project" value="UniProtKB-KW"/>
</dbReference>
<dbReference type="InterPro" id="IPR015267">
    <property type="entry name" value="PPP4R2"/>
</dbReference>
<dbReference type="PANTHER" id="PTHR16487">
    <property type="entry name" value="PPP4R2-RELATED PROTEIN"/>
    <property type="match status" value="1"/>
</dbReference>
<dbReference type="PANTHER" id="PTHR16487:SF5">
    <property type="entry name" value="SERINE_THREONINE-PROTEIN PHOSPHATASE 4 REGULATORY SUBUNIT 2"/>
    <property type="match status" value="1"/>
</dbReference>
<dbReference type="Pfam" id="PF09184">
    <property type="entry name" value="PPP4R2"/>
    <property type="match status" value="1"/>
</dbReference>
<feature type="chain" id="PRO_0000299366" description="Serine/threonine-protein phosphatase 4 regulatory subunit 2">
    <location>
        <begin position="1"/>
        <end position="417"/>
    </location>
</feature>
<feature type="region of interest" description="Disordered" evidence="2">
    <location>
        <begin position="141"/>
        <end position="417"/>
    </location>
</feature>
<feature type="compositionally biased region" description="Polar residues" evidence="2">
    <location>
        <begin position="158"/>
        <end position="170"/>
    </location>
</feature>
<feature type="compositionally biased region" description="Polar residues" evidence="2">
    <location>
        <begin position="186"/>
        <end position="196"/>
    </location>
</feature>
<feature type="compositionally biased region" description="Basic and acidic residues" evidence="2">
    <location>
        <begin position="197"/>
        <end position="213"/>
    </location>
</feature>
<feature type="compositionally biased region" description="Low complexity" evidence="2">
    <location>
        <begin position="214"/>
        <end position="226"/>
    </location>
</feature>
<feature type="compositionally biased region" description="Basic and acidic residues" evidence="2">
    <location>
        <begin position="243"/>
        <end position="258"/>
    </location>
</feature>
<feature type="compositionally biased region" description="Polar residues" evidence="2">
    <location>
        <begin position="259"/>
        <end position="268"/>
    </location>
</feature>
<feature type="compositionally biased region" description="Basic and acidic residues" evidence="2">
    <location>
        <begin position="283"/>
        <end position="296"/>
    </location>
</feature>
<feature type="compositionally biased region" description="Acidic residues" evidence="2">
    <location>
        <begin position="297"/>
        <end position="313"/>
    </location>
</feature>
<feature type="compositionally biased region" description="Basic and acidic residues" evidence="2">
    <location>
        <begin position="320"/>
        <end position="329"/>
    </location>
</feature>
<feature type="compositionally biased region" description="Low complexity" evidence="2">
    <location>
        <begin position="367"/>
        <end position="376"/>
    </location>
</feature>
<feature type="compositionally biased region" description="Polar residues" evidence="2">
    <location>
        <begin position="378"/>
        <end position="392"/>
    </location>
</feature>
<feature type="compositionally biased region" description="Acidic residues" evidence="2">
    <location>
        <begin position="402"/>
        <end position="417"/>
    </location>
</feature>
<feature type="modified residue" description="Phosphoserine" evidence="4 5">
    <location>
        <position position="159"/>
    </location>
</feature>
<feature type="modified residue" description="Phosphoserine" evidence="5">
    <location>
        <position position="226"/>
    </location>
</feature>
<feature type="sequence conflict" description="In Ref. 2; AAH98464." evidence="3" ref="2">
    <original>Y</original>
    <variation>C</variation>
    <location>
        <position position="77"/>
    </location>
</feature>
<feature type="sequence conflict" description="In Ref. 2; AAH98464." evidence="3" ref="2">
    <location>
        <position position="297"/>
    </location>
</feature>
<feature type="sequence conflict" description="In Ref. 1; BAC38523 and 2; AAH56340/AAH62117." evidence="3" ref="1 2">
    <original>T</original>
    <variation>A</variation>
    <location>
        <position position="407"/>
    </location>
</feature>
<evidence type="ECO:0000250" key="1"/>
<evidence type="ECO:0000256" key="2">
    <source>
        <dbReference type="SAM" id="MobiDB-lite"/>
    </source>
</evidence>
<evidence type="ECO:0000305" key="3"/>
<evidence type="ECO:0007744" key="4">
    <source>
    </source>
</evidence>
<evidence type="ECO:0007744" key="5">
    <source>
    </source>
</evidence>
<keyword id="KW-0963">Cytoplasm</keyword>
<keyword id="KW-0206">Cytoskeleton</keyword>
<keyword id="KW-0507">mRNA processing</keyword>
<keyword id="KW-0508">mRNA splicing</keyword>
<keyword id="KW-0539">Nucleus</keyword>
<keyword id="KW-0597">Phosphoprotein</keyword>
<keyword id="KW-1185">Reference proteome</keyword>
<protein>
    <recommendedName>
        <fullName>Serine/threonine-protein phosphatase 4 regulatory subunit 2</fullName>
    </recommendedName>
</protein>
<name>PP4R2_MOUSE</name>
<comment type="function">
    <text evidence="1">Regulatory subunit of serine/threonine-protein phosphatase 4 (PP4). May regulate the activity of PPP4C at centrosomal microtubule organizing centers. Its interaction with the SMN complex leads to enhance the temporal localization of snRNPs, suggesting a role of PPP4C in maturation of spliceosomal snRNPs. The PPP4C-PPP4R2-PPP4R3A PP4 complex specifically dephosphorylates H2AX phosphorylated on 'Ser-140' (gamma-H2AX) generated during DNA replication and required for DNA double strand break repair (By similarity). Mediates RPA2 dephosphorylation by recruiting PPP4C to RPA2 in a DNA damage-dependent manner. RPA2 dephosphorylation is required for the efficient RPA2-mediated recruitment of RAD51 to chromatin following double strand breaks, an essential step for DNA repair (By similarity).</text>
</comment>
<comment type="subunit">
    <text evidence="1">Serine/threonine-protein phosphatase 4 (PP4) occurs in different assemblies of the catalytic and one or more regulatory subunits. Component of the PP4 complexes PPP4C-PPP4R2, PPP4C-PPP4R2-PPP4R3A and PPP4C-PPP4R2-PPP4R3B. The PPP4C-PPP4R2 complex appears to be a tetramer composed of 2 molecules of PPP4C and 2 molecules of PPP4R2. Interacts with DDX20/GEMIN3 and GEMIN4 (By similarity). Interacts with RPA2; this DNA damage-dependent interaction recruits PPP4C leading to RPA2 dephosphorylation (By similarity).</text>
</comment>
<comment type="subcellular location">
    <subcellularLocation>
        <location evidence="1">Cytoplasm</location>
        <location evidence="1">Cytoskeleton</location>
        <location evidence="1">Microtubule organizing center</location>
        <location evidence="1">Centrosome</location>
    </subcellularLocation>
    <subcellularLocation>
        <location evidence="1">Nucleus</location>
    </subcellularLocation>
    <text evidence="1">Ionizing radiation induces relocalization to nuclear foci and colocalization with RPA2.</text>
</comment>
<comment type="similarity">
    <text evidence="3">Belongs to the PPP4R2 family.</text>
</comment>
<gene>
    <name type="primary">Ppp4r2</name>
</gene>
<sequence length="417" mass="46479">MDVERLQEALKDFEKRGKKEVCPVLDQFLCHVAKTGETMIQWSQFKGYFIFKLEKVMDDFRTSAPEPRGPPNPNVEYIPFDEMKERILKIVTGFNGIPFTIQRLCELLTDPRRNYTGTDKFLRGVEKNVMVVSCVCPSSEKNNSNSLNRMNGVMFPGNSPNYTDRSNINGPGTPRPLNRPKLSLSAPLTTNGLPESTDSKDSELQLSEEKGHSDSSASESEVSLLSPVKNKHPDEDAVESEEHEVKRLKFDKEGDVRETASQTVSGEVSSVRAEETETAAPPPDKDRESRTRQHCTEEEEEEEEEEEEEEEESFMTPREMVPERKNQEKESDDALTVNEETSEESHQMEGSGVSPAQTDSTSERSDSAGASRSGSDCLETQESGGPPSSKTGESVSVPSSMESEEATEVTDDPMEQD</sequence>
<accession>Q0VGB7</accession>
<accession>Q4G0D4</accession>
<accession>Q6P6N7</accession>
<accession>Q6PHU6</accession>
<accession>Q8BUU5</accession>
<organism>
    <name type="scientific">Mus musculus</name>
    <name type="common">Mouse</name>
    <dbReference type="NCBI Taxonomy" id="10090"/>
    <lineage>
        <taxon>Eukaryota</taxon>
        <taxon>Metazoa</taxon>
        <taxon>Chordata</taxon>
        <taxon>Craniata</taxon>
        <taxon>Vertebrata</taxon>
        <taxon>Euteleostomi</taxon>
        <taxon>Mammalia</taxon>
        <taxon>Eutheria</taxon>
        <taxon>Euarchontoglires</taxon>
        <taxon>Glires</taxon>
        <taxon>Rodentia</taxon>
        <taxon>Myomorpha</taxon>
        <taxon>Muroidea</taxon>
        <taxon>Muridae</taxon>
        <taxon>Murinae</taxon>
        <taxon>Mus</taxon>
        <taxon>Mus</taxon>
    </lineage>
</organism>
<reference key="1">
    <citation type="journal article" date="2005" name="Science">
        <title>The transcriptional landscape of the mammalian genome.</title>
        <authorList>
            <person name="Carninci P."/>
            <person name="Kasukawa T."/>
            <person name="Katayama S."/>
            <person name="Gough J."/>
            <person name="Frith M.C."/>
            <person name="Maeda N."/>
            <person name="Oyama R."/>
            <person name="Ravasi T."/>
            <person name="Lenhard B."/>
            <person name="Wells C."/>
            <person name="Kodzius R."/>
            <person name="Shimokawa K."/>
            <person name="Bajic V.B."/>
            <person name="Brenner S.E."/>
            <person name="Batalov S."/>
            <person name="Forrest A.R."/>
            <person name="Zavolan M."/>
            <person name="Davis M.J."/>
            <person name="Wilming L.G."/>
            <person name="Aidinis V."/>
            <person name="Allen J.E."/>
            <person name="Ambesi-Impiombato A."/>
            <person name="Apweiler R."/>
            <person name="Aturaliya R.N."/>
            <person name="Bailey T.L."/>
            <person name="Bansal M."/>
            <person name="Baxter L."/>
            <person name="Beisel K.W."/>
            <person name="Bersano T."/>
            <person name="Bono H."/>
            <person name="Chalk A.M."/>
            <person name="Chiu K.P."/>
            <person name="Choudhary V."/>
            <person name="Christoffels A."/>
            <person name="Clutterbuck D.R."/>
            <person name="Crowe M.L."/>
            <person name="Dalla E."/>
            <person name="Dalrymple B.P."/>
            <person name="de Bono B."/>
            <person name="Della Gatta G."/>
            <person name="di Bernardo D."/>
            <person name="Down T."/>
            <person name="Engstrom P."/>
            <person name="Fagiolini M."/>
            <person name="Faulkner G."/>
            <person name="Fletcher C.F."/>
            <person name="Fukushima T."/>
            <person name="Furuno M."/>
            <person name="Futaki S."/>
            <person name="Gariboldi M."/>
            <person name="Georgii-Hemming P."/>
            <person name="Gingeras T.R."/>
            <person name="Gojobori T."/>
            <person name="Green R.E."/>
            <person name="Gustincich S."/>
            <person name="Harbers M."/>
            <person name="Hayashi Y."/>
            <person name="Hensch T.K."/>
            <person name="Hirokawa N."/>
            <person name="Hill D."/>
            <person name="Huminiecki L."/>
            <person name="Iacono M."/>
            <person name="Ikeo K."/>
            <person name="Iwama A."/>
            <person name="Ishikawa T."/>
            <person name="Jakt M."/>
            <person name="Kanapin A."/>
            <person name="Katoh M."/>
            <person name="Kawasawa Y."/>
            <person name="Kelso J."/>
            <person name="Kitamura H."/>
            <person name="Kitano H."/>
            <person name="Kollias G."/>
            <person name="Krishnan S.P."/>
            <person name="Kruger A."/>
            <person name="Kummerfeld S.K."/>
            <person name="Kurochkin I.V."/>
            <person name="Lareau L.F."/>
            <person name="Lazarevic D."/>
            <person name="Lipovich L."/>
            <person name="Liu J."/>
            <person name="Liuni S."/>
            <person name="McWilliam S."/>
            <person name="Madan Babu M."/>
            <person name="Madera M."/>
            <person name="Marchionni L."/>
            <person name="Matsuda H."/>
            <person name="Matsuzawa S."/>
            <person name="Miki H."/>
            <person name="Mignone F."/>
            <person name="Miyake S."/>
            <person name="Morris K."/>
            <person name="Mottagui-Tabar S."/>
            <person name="Mulder N."/>
            <person name="Nakano N."/>
            <person name="Nakauchi H."/>
            <person name="Ng P."/>
            <person name="Nilsson R."/>
            <person name="Nishiguchi S."/>
            <person name="Nishikawa S."/>
            <person name="Nori F."/>
            <person name="Ohara O."/>
            <person name="Okazaki Y."/>
            <person name="Orlando V."/>
            <person name="Pang K.C."/>
            <person name="Pavan W.J."/>
            <person name="Pavesi G."/>
            <person name="Pesole G."/>
            <person name="Petrovsky N."/>
            <person name="Piazza S."/>
            <person name="Reed J."/>
            <person name="Reid J.F."/>
            <person name="Ring B.Z."/>
            <person name="Ringwald M."/>
            <person name="Rost B."/>
            <person name="Ruan Y."/>
            <person name="Salzberg S.L."/>
            <person name="Sandelin A."/>
            <person name="Schneider C."/>
            <person name="Schoenbach C."/>
            <person name="Sekiguchi K."/>
            <person name="Semple C.A."/>
            <person name="Seno S."/>
            <person name="Sessa L."/>
            <person name="Sheng Y."/>
            <person name="Shibata Y."/>
            <person name="Shimada H."/>
            <person name="Shimada K."/>
            <person name="Silva D."/>
            <person name="Sinclair B."/>
            <person name="Sperling S."/>
            <person name="Stupka E."/>
            <person name="Sugiura K."/>
            <person name="Sultana R."/>
            <person name="Takenaka Y."/>
            <person name="Taki K."/>
            <person name="Tammoja K."/>
            <person name="Tan S.L."/>
            <person name="Tang S."/>
            <person name="Taylor M.S."/>
            <person name="Tegner J."/>
            <person name="Teichmann S.A."/>
            <person name="Ueda H.R."/>
            <person name="van Nimwegen E."/>
            <person name="Verardo R."/>
            <person name="Wei C.L."/>
            <person name="Yagi K."/>
            <person name="Yamanishi H."/>
            <person name="Zabarovsky E."/>
            <person name="Zhu S."/>
            <person name="Zimmer A."/>
            <person name="Hide W."/>
            <person name="Bult C."/>
            <person name="Grimmond S.M."/>
            <person name="Teasdale R.D."/>
            <person name="Liu E.T."/>
            <person name="Brusic V."/>
            <person name="Quackenbush J."/>
            <person name="Wahlestedt C."/>
            <person name="Mattick J.S."/>
            <person name="Hume D.A."/>
            <person name="Kai C."/>
            <person name="Sasaki D."/>
            <person name="Tomaru Y."/>
            <person name="Fukuda S."/>
            <person name="Kanamori-Katayama M."/>
            <person name="Suzuki M."/>
            <person name="Aoki J."/>
            <person name="Arakawa T."/>
            <person name="Iida J."/>
            <person name="Imamura K."/>
            <person name="Itoh M."/>
            <person name="Kato T."/>
            <person name="Kawaji H."/>
            <person name="Kawagashira N."/>
            <person name="Kawashima T."/>
            <person name="Kojima M."/>
            <person name="Kondo S."/>
            <person name="Konno H."/>
            <person name="Nakano K."/>
            <person name="Ninomiya N."/>
            <person name="Nishio T."/>
            <person name="Okada M."/>
            <person name="Plessy C."/>
            <person name="Shibata K."/>
            <person name="Shiraki T."/>
            <person name="Suzuki S."/>
            <person name="Tagami M."/>
            <person name="Waki K."/>
            <person name="Watahiki A."/>
            <person name="Okamura-Oho Y."/>
            <person name="Suzuki H."/>
            <person name="Kawai J."/>
            <person name="Hayashizaki Y."/>
        </authorList>
    </citation>
    <scope>NUCLEOTIDE SEQUENCE [LARGE SCALE MRNA]</scope>
    <source>
        <strain>C57BL/6J</strain>
        <tissue>Cerebellum</tissue>
    </source>
</reference>
<reference key="2">
    <citation type="journal article" date="2004" name="Genome Res.">
        <title>The status, quality, and expansion of the NIH full-length cDNA project: the Mammalian Gene Collection (MGC).</title>
        <authorList>
            <consortium name="The MGC Project Team"/>
        </authorList>
    </citation>
    <scope>NUCLEOTIDE SEQUENCE [LARGE SCALE MRNA]</scope>
    <source>
        <strain>C57BL/6J</strain>
        <strain>CD-1</strain>
        <strain>NMRI</strain>
        <tissue>Brain</tissue>
        <tissue>Mammary tumor</tissue>
        <tissue>Neural stem cell</tissue>
    </source>
</reference>
<reference key="3">
    <citation type="journal article" date="2007" name="Proc. Natl. Acad. Sci. U.S.A.">
        <title>Large-scale phosphorylation analysis of mouse liver.</title>
        <authorList>
            <person name="Villen J."/>
            <person name="Beausoleil S.A."/>
            <person name="Gerber S.A."/>
            <person name="Gygi S.P."/>
        </authorList>
    </citation>
    <scope>PHOSPHORYLATION [LARGE SCALE ANALYSIS] AT SER-159</scope>
    <scope>IDENTIFICATION BY MASS SPECTROMETRY [LARGE SCALE ANALYSIS]</scope>
    <source>
        <tissue>Liver</tissue>
    </source>
</reference>
<reference key="4">
    <citation type="journal article" date="2010" name="Cell">
        <title>A tissue-specific atlas of mouse protein phosphorylation and expression.</title>
        <authorList>
            <person name="Huttlin E.L."/>
            <person name="Jedrychowski M.P."/>
            <person name="Elias J.E."/>
            <person name="Goswami T."/>
            <person name="Rad R."/>
            <person name="Beausoleil S.A."/>
            <person name="Villen J."/>
            <person name="Haas W."/>
            <person name="Sowa M.E."/>
            <person name="Gygi S.P."/>
        </authorList>
    </citation>
    <scope>PHOSPHORYLATION [LARGE SCALE ANALYSIS] AT SER-159 AND SER-226</scope>
    <scope>IDENTIFICATION BY MASS SPECTROMETRY [LARGE SCALE ANALYSIS]</scope>
    <source>
        <tissue>Brain</tissue>
        <tissue>Kidney</tissue>
        <tissue>Liver</tissue>
        <tissue>Lung</tissue>
        <tissue>Pancreas</tissue>
        <tissue>Spleen</tissue>
        <tissue>Testis</tissue>
    </source>
</reference>
<proteinExistence type="evidence at protein level"/>